<gene>
    <name type="primary">YS1</name>
</gene>
<feature type="chain" id="PRO_0000311420" description="Iron-phytosiderophore transporter yellow stripe 1">
    <location>
        <begin position="1"/>
        <end position="682"/>
    </location>
</feature>
<feature type="transmembrane region" description="Helical" evidence="1">
    <location>
        <begin position="56"/>
        <end position="76"/>
    </location>
</feature>
<feature type="transmembrane region" description="Helical" evidence="1">
    <location>
        <begin position="79"/>
        <end position="99"/>
    </location>
</feature>
<feature type="transmembrane region" description="Helical" evidence="1">
    <location>
        <begin position="124"/>
        <end position="144"/>
    </location>
</feature>
<feature type="transmembrane region" description="Helical" evidence="1">
    <location>
        <begin position="167"/>
        <end position="187"/>
    </location>
</feature>
<feature type="transmembrane region" description="Helical" evidence="1">
    <location>
        <begin position="236"/>
        <end position="256"/>
    </location>
</feature>
<feature type="transmembrane region" description="Helical" evidence="1">
    <location>
        <begin position="288"/>
        <end position="308"/>
    </location>
</feature>
<feature type="transmembrane region" description="Helical" evidence="1">
    <location>
        <begin position="334"/>
        <end position="354"/>
    </location>
</feature>
<feature type="transmembrane region" description="Helical" evidence="1">
    <location>
        <begin position="396"/>
        <end position="416"/>
    </location>
</feature>
<feature type="transmembrane region" description="Helical" evidence="1">
    <location>
        <begin position="428"/>
        <end position="448"/>
    </location>
</feature>
<feature type="transmembrane region" description="Helical" evidence="1">
    <location>
        <begin position="460"/>
        <end position="480"/>
    </location>
</feature>
<feature type="transmembrane region" description="Helical" evidence="1">
    <location>
        <begin position="514"/>
        <end position="534"/>
    </location>
</feature>
<feature type="transmembrane region" description="Helical" evidence="1">
    <location>
        <begin position="549"/>
        <end position="569"/>
    </location>
</feature>
<feature type="transmembrane region" description="Helical" evidence="1">
    <location>
        <begin position="574"/>
        <end position="594"/>
    </location>
</feature>
<feature type="transmembrane region" description="Helical" evidence="1">
    <location>
        <begin position="612"/>
        <end position="632"/>
    </location>
</feature>
<feature type="transmembrane region" description="Helical" evidence="1">
    <location>
        <begin position="640"/>
        <end position="660"/>
    </location>
</feature>
<feature type="region of interest" description="Disordered" evidence="2">
    <location>
        <begin position="1"/>
        <end position="36"/>
    </location>
</feature>
<sequence length="682" mass="74418">MDLARRGGAAGADDEGEIERHEPAPEDMESDPAAAREKELELERVQSWREQVTLRGVVAALLIGFMYSVIVMKIALTTGLVPTLNVSAALMAFLALRGWTRVLERLGVAHRPFTRQENCVIETCAVACYTIAFGGGFGSTLLGLDKKTYELAGASPANVPGSYKDPGFGWMAGFVAAISFAGLLSLIPLRKVLVIDYKLTYPSGTATAVLINGFHTKQGDKNARMQVRGFLKYFGLSFVWSFFQWFYTGGEVCGFVQFPTFGLKAWKQTFFFDFSLTYVGAGMICSHLVNISTLLGAILSWGILWPLISKQKGEWYPANIPESSMKSLYGYKAFLCIALIMGDGTYHFFKVFGVTVKSLHQRLSRKRATNRVANGGDEMAALDDLQRDEIFSDGSFPAWAAYAGYAALTVVSAVIIPHMFRQVKWYYVIVAYVLAPLLGFANSYGTGLTDINMAYNYGKIALFIFAAWAGRDNGVIAGLAGGTLVKQLVMASADLMHDFKTGHLTMTSPRSLLVAQFIGTAMGCVVAPLTFLLFYNAFDIGNPTGYWKAPYGLIYRNMAILGVEGFSVLPRHCLALSAGFFAFAFVFSVARDVLPRKYARFVPLPMAMAVPFLVGGSFAIDMCVGSLAVFVWEKVNRKEAVFMVPAVASGLICGDGIWTFPSSILALAKIKPPICMKFTPGS</sequence>
<accession>Q9AY27</accession>
<proteinExistence type="evidence at transcript level"/>
<protein>
    <recommendedName>
        <fullName>Iron-phytosiderophore transporter yellow stripe 1</fullName>
    </recommendedName>
    <alternativeName>
        <fullName>ZmYS1</fullName>
    </alternativeName>
</protein>
<evidence type="ECO:0000255" key="1"/>
<evidence type="ECO:0000256" key="2">
    <source>
        <dbReference type="SAM" id="MobiDB-lite"/>
    </source>
</evidence>
<evidence type="ECO:0000269" key="3">
    <source>
    </source>
</evidence>
<evidence type="ECO:0000269" key="4">
    <source>
    </source>
</evidence>
<evidence type="ECO:0000269" key="5">
    <source>
    </source>
</evidence>
<evidence type="ECO:0000305" key="6"/>
<comment type="function">
    <text evidence="3 4 5">Involved in Fe(3+) uptake. Acts as a proton-coupled symporter for phytosiderophore- and nicotianamine-chelated metals. Capable of transporting either Fe(2+)-nicotianamine or Fe(3+)-phytosiderophore. May transport iron, zinc, nickel, copper and, at a lower rate, manganese and cadmium.</text>
</comment>
<comment type="subcellular location">
    <subcellularLocation>
        <location evidence="6">Membrane</location>
        <topology evidence="6">Multi-pass membrane protein</topology>
    </subcellularLocation>
</comment>
<comment type="tissue specificity">
    <text evidence="3 5">Expressed in roots of young maize seedlings. Not detected in leaves of iron-sufficient plants, but accumulates in roots and leaves of iron-deficient plants.</text>
</comment>
<comment type="induction">
    <text evidence="3 5">Induced upon iron deficiency, but no effect of copper or zinc starvation.</text>
</comment>
<comment type="disruption phenotype">
    <text evidence="3">Plants display leaves with yellow stripes. Iron-phytosiderophore transport is increased at low pH and inhibited by the proton uncoupler CCCP.</text>
</comment>
<comment type="similarity">
    <text evidence="6">Belongs to the YSL (TC 2.A.67.2) family.</text>
</comment>
<dbReference type="EMBL" id="AF186234">
    <property type="protein sequence ID" value="AAG17016.2"/>
    <property type="molecule type" value="mRNA"/>
</dbReference>
<dbReference type="RefSeq" id="NP_001104952.1">
    <property type="nucleotide sequence ID" value="NM_001111482.1"/>
</dbReference>
<dbReference type="SMR" id="Q9AY27"/>
<dbReference type="FunCoup" id="Q9AY27">
    <property type="interactions" value="61"/>
</dbReference>
<dbReference type="STRING" id="4577.Q9AY27"/>
<dbReference type="TCDB" id="2.A.67.2.1">
    <property type="family name" value="the oligopeptide transporter (opt) family"/>
</dbReference>
<dbReference type="PaxDb" id="4577-GRMZM2G156599_P01"/>
<dbReference type="MaizeGDB" id="99123"/>
<dbReference type="eggNOG" id="ENOG502QQ2H">
    <property type="taxonomic scope" value="Eukaryota"/>
</dbReference>
<dbReference type="InParanoid" id="Q9AY27"/>
<dbReference type="BioCyc" id="MetaCyc:MONOMER-14020"/>
<dbReference type="Proteomes" id="UP000007305">
    <property type="component" value="Unplaced"/>
</dbReference>
<dbReference type="ExpressionAtlas" id="Q9AY27">
    <property type="expression patterns" value="baseline and differential"/>
</dbReference>
<dbReference type="GO" id="GO:0005886">
    <property type="term" value="C:plasma membrane"/>
    <property type="evidence" value="ECO:0000318"/>
    <property type="project" value="GO_Central"/>
</dbReference>
<dbReference type="GO" id="GO:0051980">
    <property type="term" value="F:iron-nicotianamine transmembrane transporter activity"/>
    <property type="evidence" value="ECO:0000318"/>
    <property type="project" value="GO_Central"/>
</dbReference>
<dbReference type="GO" id="GO:0035673">
    <property type="term" value="F:oligopeptide transmembrane transporter activity"/>
    <property type="evidence" value="ECO:0007669"/>
    <property type="project" value="InterPro"/>
</dbReference>
<dbReference type="GO" id="GO:0010039">
    <property type="term" value="P:response to iron ion"/>
    <property type="evidence" value="ECO:0000318"/>
    <property type="project" value="GO_Central"/>
</dbReference>
<dbReference type="GO" id="GO:0048316">
    <property type="term" value="P:seed development"/>
    <property type="evidence" value="ECO:0000318"/>
    <property type="project" value="GO_Central"/>
</dbReference>
<dbReference type="InterPro" id="IPR004813">
    <property type="entry name" value="OPT"/>
</dbReference>
<dbReference type="InterPro" id="IPR045035">
    <property type="entry name" value="YSL-like"/>
</dbReference>
<dbReference type="NCBIfam" id="TIGR00728">
    <property type="entry name" value="OPT_sfam"/>
    <property type="match status" value="1"/>
</dbReference>
<dbReference type="PANTHER" id="PTHR31645:SF17">
    <property type="entry name" value="IRON-PHYTOSIDEROPHORE TRANSPORTER YSL15"/>
    <property type="match status" value="1"/>
</dbReference>
<dbReference type="PANTHER" id="PTHR31645">
    <property type="entry name" value="OLIGOPEPTIDE TRANSPORTER YGL114W-RELATED"/>
    <property type="match status" value="1"/>
</dbReference>
<dbReference type="Pfam" id="PF03169">
    <property type="entry name" value="OPT"/>
    <property type="match status" value="1"/>
</dbReference>
<keyword id="KW-0406">Ion transport</keyword>
<keyword id="KW-0408">Iron</keyword>
<keyword id="KW-0410">Iron transport</keyword>
<keyword id="KW-0472">Membrane</keyword>
<keyword id="KW-1185">Reference proteome</keyword>
<keyword id="KW-0812">Transmembrane</keyword>
<keyword id="KW-1133">Transmembrane helix</keyword>
<keyword id="KW-0813">Transport</keyword>
<organism>
    <name type="scientific">Zea mays</name>
    <name type="common">Maize</name>
    <dbReference type="NCBI Taxonomy" id="4577"/>
    <lineage>
        <taxon>Eukaryota</taxon>
        <taxon>Viridiplantae</taxon>
        <taxon>Streptophyta</taxon>
        <taxon>Embryophyta</taxon>
        <taxon>Tracheophyta</taxon>
        <taxon>Spermatophyta</taxon>
        <taxon>Magnoliopsida</taxon>
        <taxon>Liliopsida</taxon>
        <taxon>Poales</taxon>
        <taxon>Poaceae</taxon>
        <taxon>PACMAD clade</taxon>
        <taxon>Panicoideae</taxon>
        <taxon>Andropogonodae</taxon>
        <taxon>Andropogoneae</taxon>
        <taxon>Tripsacinae</taxon>
        <taxon>Zea</taxon>
    </lineage>
</organism>
<reference key="1">
    <citation type="journal article" date="2001" name="Nature">
        <title>Maize yellow stripe1 encodes a membrane protein directly involved in Fe(III) uptake.</title>
        <authorList>
            <person name="Curie C."/>
            <person name="Panaviene Z."/>
            <person name="Loulergue C."/>
            <person name="Dellaporta S.L."/>
            <person name="Briat J.-F."/>
            <person name="Walker E.L."/>
        </authorList>
    </citation>
    <scope>NUCLEOTIDE SEQUENCE [MRNA]</scope>
    <scope>FUNCTION</scope>
    <scope>TISSUE SPECIFICITY</scope>
    <scope>INDUCTION</scope>
    <scope>DISRUPTION PHENOTYPE</scope>
</reference>
<reference key="2">
    <citation type="journal article" date="2004" name="J. Biol. Chem.">
        <title>ZmYS1 functions as a proton-coupled symporter for phytosiderophore- and nicotianamine-chelated metals.</title>
        <authorList>
            <person name="Schaaf G."/>
            <person name="Ludewig U."/>
            <person name="Erenoglu B.E."/>
            <person name="Mori S."/>
            <person name="Kitahara T."/>
            <person name="von Wiren N."/>
        </authorList>
    </citation>
    <scope>FUNCTION</scope>
    <scope>INHIBITION BY CCCP</scope>
</reference>
<reference key="3">
    <citation type="journal article" date="2004" name="Plant Physiol.">
        <title>Yellow stripe1. Expanded roles for the maize iron-phytosiderophore transporter.</title>
        <authorList>
            <person name="Roberts L.A."/>
            <person name="Pierson A.J."/>
            <person name="Panaviene Z."/>
            <person name="Walker E.L."/>
        </authorList>
    </citation>
    <scope>FUNCTION</scope>
    <scope>TISSUE SPECIFICITY</scope>
    <scope>INDUCTION</scope>
</reference>
<name>YS1_MAIZE</name>